<name>ATPE_STRM5</name>
<evidence type="ECO:0000255" key="1">
    <source>
        <dbReference type="HAMAP-Rule" id="MF_00530"/>
    </source>
</evidence>
<feature type="chain" id="PRO_1000127895" description="ATP synthase epsilon chain">
    <location>
        <begin position="1"/>
        <end position="140"/>
    </location>
</feature>
<organism>
    <name type="scientific">Stenotrophomonas maltophilia (strain R551-3)</name>
    <dbReference type="NCBI Taxonomy" id="391008"/>
    <lineage>
        <taxon>Bacteria</taxon>
        <taxon>Pseudomonadati</taxon>
        <taxon>Pseudomonadota</taxon>
        <taxon>Gammaproteobacteria</taxon>
        <taxon>Lysobacterales</taxon>
        <taxon>Lysobacteraceae</taxon>
        <taxon>Stenotrophomonas</taxon>
        <taxon>Stenotrophomonas maltophilia group</taxon>
    </lineage>
</organism>
<keyword id="KW-0066">ATP synthesis</keyword>
<keyword id="KW-0997">Cell inner membrane</keyword>
<keyword id="KW-1003">Cell membrane</keyword>
<keyword id="KW-0139">CF(1)</keyword>
<keyword id="KW-0375">Hydrogen ion transport</keyword>
<keyword id="KW-0406">Ion transport</keyword>
<keyword id="KW-0472">Membrane</keyword>
<keyword id="KW-0813">Transport</keyword>
<protein>
    <recommendedName>
        <fullName evidence="1">ATP synthase epsilon chain</fullName>
    </recommendedName>
    <alternativeName>
        <fullName evidence="1">ATP synthase F1 sector epsilon subunit</fullName>
    </alternativeName>
    <alternativeName>
        <fullName evidence="1">F-ATPase epsilon subunit</fullName>
    </alternativeName>
</protein>
<reference key="1">
    <citation type="submission" date="2008-06" db="EMBL/GenBank/DDBJ databases">
        <title>Complete sequence of Stenotrophomonas maltophilia R551-3.</title>
        <authorList>
            <consortium name="US DOE Joint Genome Institute"/>
            <person name="Lucas S."/>
            <person name="Copeland A."/>
            <person name="Lapidus A."/>
            <person name="Glavina del Rio T."/>
            <person name="Dalin E."/>
            <person name="Tice H."/>
            <person name="Pitluck S."/>
            <person name="Chain P."/>
            <person name="Malfatti S."/>
            <person name="Shin M."/>
            <person name="Vergez L."/>
            <person name="Lang D."/>
            <person name="Schmutz J."/>
            <person name="Larimer F."/>
            <person name="Land M."/>
            <person name="Hauser L."/>
            <person name="Kyrpides N."/>
            <person name="Mikhailova N."/>
            <person name="Taghavi S."/>
            <person name="Monchy S."/>
            <person name="Newman L."/>
            <person name="Vangronsveld J."/>
            <person name="van der Lelie D."/>
            <person name="Richardson P."/>
        </authorList>
    </citation>
    <scope>NUCLEOTIDE SEQUENCE [LARGE SCALE GENOMIC DNA]</scope>
    <source>
        <strain>R551-3</strain>
    </source>
</reference>
<comment type="function">
    <text evidence="1">Produces ATP from ADP in the presence of a proton gradient across the membrane.</text>
</comment>
<comment type="subunit">
    <text evidence="1">F-type ATPases have 2 components, CF(1) - the catalytic core - and CF(0) - the membrane proton channel. CF(1) has five subunits: alpha(3), beta(3), gamma(1), delta(1), epsilon(1). CF(0) has three main subunits: a, b and c.</text>
</comment>
<comment type="subcellular location">
    <subcellularLocation>
        <location evidence="1">Cell inner membrane</location>
        <topology evidence="1">Peripheral membrane protein</topology>
    </subcellularLocation>
</comment>
<comment type="similarity">
    <text evidence="1">Belongs to the ATPase epsilon chain family.</text>
</comment>
<dbReference type="EMBL" id="CP001111">
    <property type="protein sequence ID" value="ACF53209.1"/>
    <property type="molecule type" value="Genomic_DNA"/>
</dbReference>
<dbReference type="RefSeq" id="WP_005411127.1">
    <property type="nucleotide sequence ID" value="NC_011071.1"/>
</dbReference>
<dbReference type="SMR" id="B4SJR8"/>
<dbReference type="STRING" id="391008.Smal_3510"/>
<dbReference type="KEGG" id="smt:Smal_3510"/>
<dbReference type="eggNOG" id="COG0355">
    <property type="taxonomic scope" value="Bacteria"/>
</dbReference>
<dbReference type="HOGENOM" id="CLU_084338_2_0_6"/>
<dbReference type="OrthoDB" id="9791445at2"/>
<dbReference type="Proteomes" id="UP000001867">
    <property type="component" value="Chromosome"/>
</dbReference>
<dbReference type="GO" id="GO:0005886">
    <property type="term" value="C:plasma membrane"/>
    <property type="evidence" value="ECO:0007669"/>
    <property type="project" value="UniProtKB-SubCell"/>
</dbReference>
<dbReference type="GO" id="GO:0045259">
    <property type="term" value="C:proton-transporting ATP synthase complex"/>
    <property type="evidence" value="ECO:0007669"/>
    <property type="project" value="UniProtKB-KW"/>
</dbReference>
<dbReference type="GO" id="GO:0005524">
    <property type="term" value="F:ATP binding"/>
    <property type="evidence" value="ECO:0007669"/>
    <property type="project" value="UniProtKB-UniRule"/>
</dbReference>
<dbReference type="GO" id="GO:0046933">
    <property type="term" value="F:proton-transporting ATP synthase activity, rotational mechanism"/>
    <property type="evidence" value="ECO:0007669"/>
    <property type="project" value="UniProtKB-UniRule"/>
</dbReference>
<dbReference type="CDD" id="cd12152">
    <property type="entry name" value="F1-ATPase_delta"/>
    <property type="match status" value="1"/>
</dbReference>
<dbReference type="FunFam" id="2.60.15.10:FF:000001">
    <property type="entry name" value="ATP synthase epsilon chain"/>
    <property type="match status" value="1"/>
</dbReference>
<dbReference type="Gene3D" id="1.20.5.440">
    <property type="entry name" value="ATP synthase delta/epsilon subunit, C-terminal domain"/>
    <property type="match status" value="1"/>
</dbReference>
<dbReference type="Gene3D" id="2.60.15.10">
    <property type="entry name" value="F0F1 ATP synthase delta/epsilon subunit, N-terminal"/>
    <property type="match status" value="1"/>
</dbReference>
<dbReference type="HAMAP" id="MF_00530">
    <property type="entry name" value="ATP_synth_epsil_bac"/>
    <property type="match status" value="1"/>
</dbReference>
<dbReference type="InterPro" id="IPR036794">
    <property type="entry name" value="ATP_F1_dsu/esu_C_sf"/>
</dbReference>
<dbReference type="InterPro" id="IPR001469">
    <property type="entry name" value="ATP_synth_F1_dsu/esu"/>
</dbReference>
<dbReference type="InterPro" id="IPR020546">
    <property type="entry name" value="ATP_synth_F1_dsu/esu_N"/>
</dbReference>
<dbReference type="InterPro" id="IPR020547">
    <property type="entry name" value="ATP_synth_F1_esu_C"/>
</dbReference>
<dbReference type="InterPro" id="IPR036771">
    <property type="entry name" value="ATPsynth_dsu/esu_N"/>
</dbReference>
<dbReference type="NCBIfam" id="TIGR01216">
    <property type="entry name" value="ATP_synt_epsi"/>
    <property type="match status" value="1"/>
</dbReference>
<dbReference type="NCBIfam" id="NF001847">
    <property type="entry name" value="PRK00571.1-4"/>
    <property type="match status" value="1"/>
</dbReference>
<dbReference type="PANTHER" id="PTHR13822">
    <property type="entry name" value="ATP SYNTHASE DELTA/EPSILON CHAIN"/>
    <property type="match status" value="1"/>
</dbReference>
<dbReference type="PANTHER" id="PTHR13822:SF10">
    <property type="entry name" value="ATP SYNTHASE EPSILON CHAIN, CHLOROPLASTIC"/>
    <property type="match status" value="1"/>
</dbReference>
<dbReference type="Pfam" id="PF00401">
    <property type="entry name" value="ATP-synt_DE"/>
    <property type="match status" value="1"/>
</dbReference>
<dbReference type="Pfam" id="PF02823">
    <property type="entry name" value="ATP-synt_DE_N"/>
    <property type="match status" value="1"/>
</dbReference>
<dbReference type="SUPFAM" id="SSF46604">
    <property type="entry name" value="Epsilon subunit of F1F0-ATP synthase C-terminal domain"/>
    <property type="match status" value="1"/>
</dbReference>
<dbReference type="SUPFAM" id="SSF51344">
    <property type="entry name" value="Epsilon subunit of F1F0-ATP synthase N-terminal domain"/>
    <property type="match status" value="1"/>
</dbReference>
<accession>B4SJR8</accession>
<sequence length="140" mass="15117">MSTIRCDIVSAEQEIFRGEATLVVATGELGELGIAPKHAPLITRLKPGKVVVTTPNGEQLDFAISGGILEVQPQVVTVLADTAIRAQDIDEASVRKAKEEAERILANRGEAMEVAEAQQKLAEAVVQLQALERLRKTLKH</sequence>
<proteinExistence type="inferred from homology"/>
<gene>
    <name evidence="1" type="primary">atpC</name>
    <name type="ordered locus">Smal_3510</name>
</gene>